<feature type="chain" id="PRO_0000052890" description="Hemoglobin subunit beta-A">
    <location>
        <begin position="1"/>
        <end position="145"/>
    </location>
</feature>
<feature type="domain" description="Globin" evidence="1">
    <location>
        <begin position="1"/>
        <end position="145"/>
    </location>
</feature>
<feature type="binding site" description="distal binding residue">
    <location>
        <position position="62"/>
    </location>
    <ligand>
        <name>heme b</name>
        <dbReference type="ChEBI" id="CHEBI:60344"/>
    </ligand>
    <ligandPart>
        <name>Fe</name>
        <dbReference type="ChEBI" id="CHEBI:18248"/>
    </ligandPart>
</feature>
<feature type="binding site" description="proximal binding residue">
    <location>
        <position position="91"/>
    </location>
    <ligand>
        <name>heme b</name>
        <dbReference type="ChEBI" id="CHEBI:60344"/>
    </ligand>
    <ligandPart>
        <name>Fe</name>
        <dbReference type="ChEBI" id="CHEBI:18248"/>
    </ligandPart>
</feature>
<protein>
    <recommendedName>
        <fullName>Hemoglobin subunit beta-A</fullName>
    </recommendedName>
    <alternativeName>
        <fullName>Beta-A-globin</fullName>
    </alternativeName>
    <alternativeName>
        <fullName>Hemoglobin beta-A chain</fullName>
    </alternativeName>
</protein>
<dbReference type="PIR" id="A02388">
    <property type="entry name" value="HBBOBB"/>
</dbReference>
<dbReference type="SMR" id="P04346"/>
<dbReference type="GO" id="GO:0072562">
    <property type="term" value="C:blood microparticle"/>
    <property type="evidence" value="ECO:0007669"/>
    <property type="project" value="TreeGrafter"/>
</dbReference>
<dbReference type="GO" id="GO:0031838">
    <property type="term" value="C:haptoglobin-hemoglobin complex"/>
    <property type="evidence" value="ECO:0007669"/>
    <property type="project" value="TreeGrafter"/>
</dbReference>
<dbReference type="GO" id="GO:0005833">
    <property type="term" value="C:hemoglobin complex"/>
    <property type="evidence" value="ECO:0007669"/>
    <property type="project" value="InterPro"/>
</dbReference>
<dbReference type="GO" id="GO:0031720">
    <property type="term" value="F:haptoglobin binding"/>
    <property type="evidence" value="ECO:0007669"/>
    <property type="project" value="TreeGrafter"/>
</dbReference>
<dbReference type="GO" id="GO:0020037">
    <property type="term" value="F:heme binding"/>
    <property type="evidence" value="ECO:0007669"/>
    <property type="project" value="InterPro"/>
</dbReference>
<dbReference type="GO" id="GO:0031721">
    <property type="term" value="F:hemoglobin alpha binding"/>
    <property type="evidence" value="ECO:0007669"/>
    <property type="project" value="TreeGrafter"/>
</dbReference>
<dbReference type="GO" id="GO:0046872">
    <property type="term" value="F:metal ion binding"/>
    <property type="evidence" value="ECO:0007669"/>
    <property type="project" value="UniProtKB-KW"/>
</dbReference>
<dbReference type="GO" id="GO:0043177">
    <property type="term" value="F:organic acid binding"/>
    <property type="evidence" value="ECO:0007669"/>
    <property type="project" value="TreeGrafter"/>
</dbReference>
<dbReference type="GO" id="GO:0019825">
    <property type="term" value="F:oxygen binding"/>
    <property type="evidence" value="ECO:0007669"/>
    <property type="project" value="InterPro"/>
</dbReference>
<dbReference type="GO" id="GO:0005344">
    <property type="term" value="F:oxygen carrier activity"/>
    <property type="evidence" value="ECO:0007669"/>
    <property type="project" value="UniProtKB-KW"/>
</dbReference>
<dbReference type="GO" id="GO:0004601">
    <property type="term" value="F:peroxidase activity"/>
    <property type="evidence" value="ECO:0007669"/>
    <property type="project" value="TreeGrafter"/>
</dbReference>
<dbReference type="GO" id="GO:0042744">
    <property type="term" value="P:hydrogen peroxide catabolic process"/>
    <property type="evidence" value="ECO:0007669"/>
    <property type="project" value="TreeGrafter"/>
</dbReference>
<dbReference type="CDD" id="cd08925">
    <property type="entry name" value="Hb-beta-like"/>
    <property type="match status" value="1"/>
</dbReference>
<dbReference type="FunFam" id="1.10.490.10:FF:000001">
    <property type="entry name" value="Hemoglobin subunit beta"/>
    <property type="match status" value="1"/>
</dbReference>
<dbReference type="Gene3D" id="1.10.490.10">
    <property type="entry name" value="Globins"/>
    <property type="match status" value="1"/>
</dbReference>
<dbReference type="InterPro" id="IPR000971">
    <property type="entry name" value="Globin"/>
</dbReference>
<dbReference type="InterPro" id="IPR009050">
    <property type="entry name" value="Globin-like_sf"/>
</dbReference>
<dbReference type="InterPro" id="IPR012292">
    <property type="entry name" value="Globin/Proto"/>
</dbReference>
<dbReference type="InterPro" id="IPR002337">
    <property type="entry name" value="Hemoglobin_b"/>
</dbReference>
<dbReference type="InterPro" id="IPR050056">
    <property type="entry name" value="Hemoglobin_oxygen_transport"/>
</dbReference>
<dbReference type="PANTHER" id="PTHR11442">
    <property type="entry name" value="HEMOGLOBIN FAMILY MEMBER"/>
    <property type="match status" value="1"/>
</dbReference>
<dbReference type="PANTHER" id="PTHR11442:SF42">
    <property type="entry name" value="HEMOGLOBIN SUBUNIT BETA"/>
    <property type="match status" value="1"/>
</dbReference>
<dbReference type="Pfam" id="PF00042">
    <property type="entry name" value="Globin"/>
    <property type="match status" value="1"/>
</dbReference>
<dbReference type="PRINTS" id="PR00814">
    <property type="entry name" value="BETAHAEM"/>
</dbReference>
<dbReference type="SUPFAM" id="SSF46458">
    <property type="entry name" value="Globin-like"/>
    <property type="match status" value="1"/>
</dbReference>
<dbReference type="PROSITE" id="PS01033">
    <property type="entry name" value="GLOBIN"/>
    <property type="match status" value="1"/>
</dbReference>
<keyword id="KW-0903">Direct protein sequencing</keyword>
<keyword id="KW-0349">Heme</keyword>
<keyword id="KW-0408">Iron</keyword>
<keyword id="KW-0479">Metal-binding</keyword>
<keyword id="KW-0561">Oxygen transport</keyword>
<keyword id="KW-0813">Transport</keyword>
<reference key="1">
    <citation type="journal article" date="1983" name="Biochem. Genet.">
        <title>Hemoglobin Bali (bovine): beta A 18(Bl)Lys leads to His: one of the 'missing links' between beta A and beta B of domestic cattle exists in the Bali cattle (Bovinae, Box banteng).</title>
        <authorList>
            <person name="Namikawa T."/>
            <person name="Takenaka O."/>
            <person name="Takahashi K."/>
        </authorList>
    </citation>
    <scope>PROTEIN SEQUENCE</scope>
</reference>
<name>HBBA_BOSJA</name>
<sequence>MLTAEEKAAVTAFWGKVHVDEVGGEALGRLLVVYPWTQRFFESFGDLSTADAVMNNPKVKAHGKKVLDSFSDGMKHLDDLKGTFAALSELHCDKLHVDPENFKLLGNVLVVVLARNFGKEFTPVLQADFQKVVAGVANALAHRYH</sequence>
<accession>P04346</accession>
<comment type="function">
    <text>Involved in oxygen transport from the lung to the various peripheral tissues.</text>
</comment>
<comment type="subunit">
    <text>Heterotetramer of two alpha chains and two beta chains.</text>
</comment>
<comment type="tissue specificity">
    <text>Red blood cells.</text>
</comment>
<comment type="similarity">
    <text evidence="1">Belongs to the globin family.</text>
</comment>
<proteinExistence type="evidence at protein level"/>
<organism>
    <name type="scientific">Bos javanicus</name>
    <name type="common">Wild banteng</name>
    <dbReference type="NCBI Taxonomy" id="9906"/>
    <lineage>
        <taxon>Eukaryota</taxon>
        <taxon>Metazoa</taxon>
        <taxon>Chordata</taxon>
        <taxon>Craniata</taxon>
        <taxon>Vertebrata</taxon>
        <taxon>Euteleostomi</taxon>
        <taxon>Mammalia</taxon>
        <taxon>Eutheria</taxon>
        <taxon>Laurasiatheria</taxon>
        <taxon>Artiodactyla</taxon>
        <taxon>Ruminantia</taxon>
        <taxon>Pecora</taxon>
        <taxon>Bovidae</taxon>
        <taxon>Bovinae</taxon>
        <taxon>Bos</taxon>
    </lineage>
</organism>
<evidence type="ECO:0000255" key="1">
    <source>
        <dbReference type="PROSITE-ProRule" id="PRU00238"/>
    </source>
</evidence>